<proteinExistence type="inferred from homology"/>
<keyword id="KW-0687">Ribonucleoprotein</keyword>
<keyword id="KW-0689">Ribosomal protein</keyword>
<keyword id="KW-0694">RNA-binding</keyword>
<keyword id="KW-0699">rRNA-binding</keyword>
<accession>Q5HG84</accession>
<protein>
    <recommendedName>
        <fullName evidence="1">Small ribosomal subunit protein uS14A</fullName>
    </recommendedName>
    <alternativeName>
        <fullName evidence="2">30S ribosomal protein S14</fullName>
    </alternativeName>
</protein>
<gene>
    <name evidence="1" type="primary">rpsN</name>
    <name type="synonym">rpsN2</name>
    <name type="ordered locus">SACOL1370</name>
</gene>
<dbReference type="EMBL" id="CP000046">
    <property type="protein sequence ID" value="AAW36619.1"/>
    <property type="molecule type" value="Genomic_DNA"/>
</dbReference>
<dbReference type="RefSeq" id="WP_001085655.1">
    <property type="nucleotide sequence ID" value="NZ_JBGOFO010000002.1"/>
</dbReference>
<dbReference type="SMR" id="Q5HG84"/>
<dbReference type="GeneID" id="98345705"/>
<dbReference type="KEGG" id="sac:SACOL1370"/>
<dbReference type="HOGENOM" id="CLU_139869_0_0_9"/>
<dbReference type="Proteomes" id="UP000000530">
    <property type="component" value="Chromosome"/>
</dbReference>
<dbReference type="GO" id="GO:0005737">
    <property type="term" value="C:cytoplasm"/>
    <property type="evidence" value="ECO:0007669"/>
    <property type="project" value="UniProtKB-ARBA"/>
</dbReference>
<dbReference type="GO" id="GO:0015935">
    <property type="term" value="C:small ribosomal subunit"/>
    <property type="evidence" value="ECO:0007669"/>
    <property type="project" value="TreeGrafter"/>
</dbReference>
<dbReference type="GO" id="GO:0019843">
    <property type="term" value="F:rRNA binding"/>
    <property type="evidence" value="ECO:0007669"/>
    <property type="project" value="UniProtKB-UniRule"/>
</dbReference>
<dbReference type="GO" id="GO:0003735">
    <property type="term" value="F:structural constituent of ribosome"/>
    <property type="evidence" value="ECO:0007669"/>
    <property type="project" value="InterPro"/>
</dbReference>
<dbReference type="GO" id="GO:0006412">
    <property type="term" value="P:translation"/>
    <property type="evidence" value="ECO:0007669"/>
    <property type="project" value="UniProtKB-UniRule"/>
</dbReference>
<dbReference type="FunFam" id="4.10.830.10:FF:000003">
    <property type="entry name" value="30S ribosomal protein S14"/>
    <property type="match status" value="1"/>
</dbReference>
<dbReference type="Gene3D" id="4.10.830.10">
    <property type="entry name" value="30s Ribosomal Protein S14, Chain N"/>
    <property type="match status" value="1"/>
</dbReference>
<dbReference type="HAMAP" id="MF_00537">
    <property type="entry name" value="Ribosomal_uS14_1"/>
    <property type="match status" value="1"/>
</dbReference>
<dbReference type="InterPro" id="IPR001209">
    <property type="entry name" value="Ribosomal_uS14"/>
</dbReference>
<dbReference type="InterPro" id="IPR023036">
    <property type="entry name" value="Ribosomal_uS14_bac/plastid"/>
</dbReference>
<dbReference type="InterPro" id="IPR018271">
    <property type="entry name" value="Ribosomal_uS14_CS"/>
</dbReference>
<dbReference type="InterPro" id="IPR043140">
    <property type="entry name" value="Ribosomal_uS14_sf"/>
</dbReference>
<dbReference type="NCBIfam" id="NF006477">
    <property type="entry name" value="PRK08881.1"/>
    <property type="match status" value="1"/>
</dbReference>
<dbReference type="PANTHER" id="PTHR19836">
    <property type="entry name" value="30S RIBOSOMAL PROTEIN S14"/>
    <property type="match status" value="1"/>
</dbReference>
<dbReference type="PANTHER" id="PTHR19836:SF19">
    <property type="entry name" value="SMALL RIBOSOMAL SUBUNIT PROTEIN US14M"/>
    <property type="match status" value="1"/>
</dbReference>
<dbReference type="Pfam" id="PF00253">
    <property type="entry name" value="Ribosomal_S14"/>
    <property type="match status" value="1"/>
</dbReference>
<dbReference type="SUPFAM" id="SSF57716">
    <property type="entry name" value="Glucocorticoid receptor-like (DNA-binding domain)"/>
    <property type="match status" value="1"/>
</dbReference>
<dbReference type="PROSITE" id="PS00527">
    <property type="entry name" value="RIBOSOMAL_S14"/>
    <property type="match status" value="1"/>
</dbReference>
<evidence type="ECO:0000255" key="1">
    <source>
        <dbReference type="HAMAP-Rule" id="MF_00537"/>
    </source>
</evidence>
<evidence type="ECO:0000305" key="2"/>
<organism>
    <name type="scientific">Staphylococcus aureus (strain COL)</name>
    <dbReference type="NCBI Taxonomy" id="93062"/>
    <lineage>
        <taxon>Bacteria</taxon>
        <taxon>Bacillati</taxon>
        <taxon>Bacillota</taxon>
        <taxon>Bacilli</taxon>
        <taxon>Bacillales</taxon>
        <taxon>Staphylococcaceae</taxon>
        <taxon>Staphylococcus</taxon>
    </lineage>
</organism>
<sequence length="89" mass="10540">MAKKSKIAKERKREELVNKYYELRKELKAKGDYEALRKLPRDSSPTRLTRRCKVTGRPRGVLRKFEMSRIAFREHAHKGQIPGVKKSSW</sequence>
<name>RS14_STAAC</name>
<comment type="function">
    <text evidence="1">Binds 16S rRNA, required for the assembly of 30S particles and may also be responsible for determining the conformation of the 16S rRNA at the A site.</text>
</comment>
<comment type="subunit">
    <text evidence="1">Part of the 30S ribosomal subunit. Contacts proteins S3 and S10.</text>
</comment>
<comment type="similarity">
    <text evidence="1">Belongs to the universal ribosomal protein uS14 family.</text>
</comment>
<feature type="chain" id="PRO_0000130932" description="Small ribosomal subunit protein uS14A">
    <location>
        <begin position="1"/>
        <end position="89"/>
    </location>
</feature>
<reference key="1">
    <citation type="journal article" date="2005" name="J. Bacteriol.">
        <title>Insights on evolution of virulence and resistance from the complete genome analysis of an early methicillin-resistant Staphylococcus aureus strain and a biofilm-producing methicillin-resistant Staphylococcus epidermidis strain.</title>
        <authorList>
            <person name="Gill S.R."/>
            <person name="Fouts D.E."/>
            <person name="Archer G.L."/>
            <person name="Mongodin E.F."/>
            <person name="DeBoy R.T."/>
            <person name="Ravel J."/>
            <person name="Paulsen I.T."/>
            <person name="Kolonay J.F."/>
            <person name="Brinkac L.M."/>
            <person name="Beanan M.J."/>
            <person name="Dodson R.J."/>
            <person name="Daugherty S.C."/>
            <person name="Madupu R."/>
            <person name="Angiuoli S.V."/>
            <person name="Durkin A.S."/>
            <person name="Haft D.H."/>
            <person name="Vamathevan J.J."/>
            <person name="Khouri H."/>
            <person name="Utterback T.R."/>
            <person name="Lee C."/>
            <person name="Dimitrov G."/>
            <person name="Jiang L."/>
            <person name="Qin H."/>
            <person name="Weidman J."/>
            <person name="Tran K."/>
            <person name="Kang K.H."/>
            <person name="Hance I.R."/>
            <person name="Nelson K.E."/>
            <person name="Fraser C.M."/>
        </authorList>
    </citation>
    <scope>NUCLEOTIDE SEQUENCE [LARGE SCALE GENOMIC DNA]</scope>
    <source>
        <strain>COL</strain>
    </source>
</reference>